<comment type="function">
    <text>Major capsid protein.</text>
</comment>
<comment type="subcellular location">
    <subcellularLocation>
        <location evidence="2">Virion</location>
    </subcellularLocation>
</comment>
<comment type="miscellaneous">
    <text>The N-terminal region like those of many plant virus capsid proteins is highly basic. It has been suggested that these regions may be involved in protein-RNA interaction.</text>
</comment>
<comment type="similarity">
    <text evidence="2">Belongs to the luteoviruses capsid protein family.</text>
</comment>
<name>CAPSD_BYDVN</name>
<organismHost>
    <name type="scientific">Avena byzantina</name>
    <dbReference type="NCBI Taxonomy" id="146531"/>
</organismHost>
<organismHost>
    <name type="scientific">Avena sativa</name>
    <name type="common">Oat</name>
    <dbReference type="NCBI Taxonomy" id="4498"/>
</organismHost>
<organismHost>
    <name type="scientific">Hordeum vulgare</name>
    <name type="common">Barley</name>
    <dbReference type="NCBI Taxonomy" id="4513"/>
</organismHost>
<organismHost>
    <name type="scientific">Lolium multiflorum</name>
    <name type="common">Italian ryegrass</name>
    <name type="synonym">Lolium perenne subsp. multiflorum</name>
    <dbReference type="NCBI Taxonomy" id="4521"/>
</organismHost>
<organismHost>
    <name type="scientific">Lolium perenne</name>
    <name type="common">Perennial ryegrass</name>
    <dbReference type="NCBI Taxonomy" id="4522"/>
</organismHost>
<organismHost>
    <name type="scientific">Oryza sativa</name>
    <name type="common">Rice</name>
    <dbReference type="NCBI Taxonomy" id="4530"/>
</organismHost>
<organismHost>
    <name type="scientific">Secale cereale</name>
    <name type="common">Rye</name>
    <dbReference type="NCBI Taxonomy" id="4550"/>
</organismHost>
<organismHost>
    <name type="scientific">Triticum aestivum</name>
    <name type="common">Wheat</name>
    <dbReference type="NCBI Taxonomy" id="4565"/>
</organismHost>
<organismHost>
    <name type="scientific">Zea mays</name>
    <name type="common">Maize</name>
    <dbReference type="NCBI Taxonomy" id="4577"/>
</organismHost>
<dbReference type="EMBL" id="D10206">
    <property type="protein sequence ID" value="BAA01055.1"/>
    <property type="molecule type" value="Genomic_RNA"/>
</dbReference>
<dbReference type="EMBL" id="X17259">
    <property type="protein sequence ID" value="CAA35160.1"/>
    <property type="molecule type" value="Genomic_RNA"/>
</dbReference>
<dbReference type="EMBL" id="L25299">
    <property type="protein sequence ID" value="AAA42869.1"/>
    <property type="molecule type" value="Genomic_RNA"/>
</dbReference>
<dbReference type="SMR" id="P27578"/>
<dbReference type="KEGG" id="vg:1478311"/>
<dbReference type="Proteomes" id="UP000203222">
    <property type="component" value="Segment"/>
</dbReference>
<dbReference type="GO" id="GO:0039617">
    <property type="term" value="C:T=3 icosahedral viral capsid"/>
    <property type="evidence" value="ECO:0007669"/>
    <property type="project" value="UniProtKB-KW"/>
</dbReference>
<dbReference type="GO" id="GO:0005198">
    <property type="term" value="F:structural molecule activity"/>
    <property type="evidence" value="ECO:0007669"/>
    <property type="project" value="InterPro"/>
</dbReference>
<dbReference type="Gene3D" id="2.60.120.20">
    <property type="match status" value="1"/>
</dbReference>
<dbReference type="InterPro" id="IPR001517">
    <property type="entry name" value="Luteo_coat"/>
</dbReference>
<dbReference type="InterPro" id="IPR029053">
    <property type="entry name" value="Viral_coat"/>
</dbReference>
<dbReference type="Pfam" id="PF00894">
    <property type="entry name" value="Luteo_coat"/>
    <property type="match status" value="1"/>
</dbReference>
<dbReference type="PRINTS" id="PR00915">
    <property type="entry name" value="LUTEOGP1COAT"/>
</dbReference>
<evidence type="ECO:0000256" key="1">
    <source>
        <dbReference type="SAM" id="MobiDB-lite"/>
    </source>
</evidence>
<evidence type="ECO:0000305" key="2"/>
<sequence length="204" mass="22187">MSTVVLRSNGNGSRRRRQRVARRRPAARTQPVVVVASNGPARRGRRRRPVGPRRGRTPRSGGGSRGETFVFSKDSLAGNSSGSITFGPSLSEYPAFQNGVLKAYHEYKITNCVLQFVSEASSTAAGSISYELDPHCKASSLASTINKFTITKTGARSFPAKMINGLEWHPSDEDQFRILYKGNGASSVAGSFKITLRVQLQNPK</sequence>
<accession>P27578</accession>
<keyword id="KW-0167">Capsid protein</keyword>
<keyword id="KW-1185">Reference proteome</keyword>
<keyword id="KW-1142">T=3 icosahedral capsid protein</keyword>
<keyword id="KW-0946">Virion</keyword>
<proteinExistence type="inferred from homology"/>
<reference key="1">
    <citation type="journal article" date="1990" name="J. Gen. Virol.">
        <title>Nucleotide sequences of coat protein genes for three isolates of barley yellow dwarf virus and their relationships to other luteovirus coat protein sequences.</title>
        <authorList>
            <person name="Vincent J.R."/>
            <person name="Ueng P.P."/>
            <person name="Lister R.M."/>
            <person name="Larkins B.A."/>
        </authorList>
    </citation>
    <scope>NUCLEOTIDE SEQUENCE [GENOMIC RNA]</scope>
</reference>
<reference key="2">
    <citation type="journal article" date="1991" name="J. Gen. Virol.">
        <title>Nucleotide sequence analysis and genomic organization of the NY-RPV isolate of barley yellow dwarf virus.</title>
        <authorList>
            <person name="Larkins B.A."/>
            <person name="Lister R.M."/>
            <person name="Vincent J.R."/>
        </authorList>
    </citation>
    <scope>NUCLEOTIDE SEQUENCE [GENOMIC RNA]</scope>
</reference>
<gene>
    <name type="ORF">ORF3</name>
</gene>
<organism>
    <name type="scientific">Cereal yellow dwarf virus (isolate RPV)</name>
    <name type="common">BYDV</name>
    <dbReference type="NCBI Taxonomy" id="2170100"/>
    <lineage>
        <taxon>Viruses</taxon>
        <taxon>Riboviria</taxon>
        <taxon>Orthornavirae</taxon>
        <taxon>Pisuviricota</taxon>
        <taxon>Pisoniviricetes</taxon>
        <taxon>Sobelivirales</taxon>
        <taxon>Solemoviridae</taxon>
        <taxon>Polerovirus</taxon>
    </lineage>
</organism>
<protein>
    <recommendedName>
        <fullName>Major capsid protein</fullName>
    </recommendedName>
    <alternativeName>
        <fullName>Coat protein</fullName>
        <shortName>CP</shortName>
    </alternativeName>
</protein>
<feature type="chain" id="PRO_0000222407" description="Major capsid protein">
    <location>
        <begin position="1"/>
        <end position="204"/>
    </location>
</feature>
<feature type="region of interest" description="Disordered" evidence="1">
    <location>
        <begin position="1"/>
        <end position="74"/>
    </location>
</feature>
<feature type="compositionally biased region" description="Polar residues" evidence="1">
    <location>
        <begin position="1"/>
        <end position="12"/>
    </location>
</feature>
<feature type="compositionally biased region" description="Basic residues" evidence="1">
    <location>
        <begin position="13"/>
        <end position="26"/>
    </location>
</feature>
<feature type="compositionally biased region" description="Low complexity" evidence="1">
    <location>
        <begin position="27"/>
        <end position="41"/>
    </location>
</feature>
<feature type="compositionally biased region" description="Basic residues" evidence="1">
    <location>
        <begin position="42"/>
        <end position="57"/>
    </location>
</feature>